<reference key="1">
    <citation type="journal article" date="1994" name="J. Biol. Chem.">
        <title>An Escherichia coli protein consisting of a domain homologous to FK506-binding proteins (FKBP) and a new metal binding motif.</title>
        <authorList>
            <person name="Wuelfing C."/>
            <person name="Lomardero J."/>
            <person name="Plueckthun A."/>
        </authorList>
    </citation>
    <scope>NUCLEOTIDE SEQUENCE [GENOMIC DNA]</scope>
    <scope>PROTEIN SEQUENCE OF 1-35 AND 141-146</scope>
    <source>
        <strain>K12 / ATCC 35607 / JM83</strain>
    </source>
</reference>
<reference key="2">
    <citation type="journal article" date="1994" name="J. Biol. Chem.">
        <title>slyD, a host gene required for phi X174 lysis, is related to the FK506-binding protein family of peptidyl-prolyl cis-trans-isomerases.</title>
        <authorList>
            <person name="Roof W.D."/>
            <person name="Horne S.M."/>
            <person name="Young K.D."/>
            <person name="Young R."/>
        </authorList>
    </citation>
    <scope>NUCLEOTIDE SEQUENCE [GENOMIC DNA]</scope>
    <source>
        <strain>K12 / CS109</strain>
    </source>
</reference>
<reference key="3">
    <citation type="journal article" date="1995" name="Arch. Microbiol.">
        <title>Escherichia coli and other species of the Enterobacteriaceae encode a protein similar to the family of Mip-like FK506-binding proteins.</title>
        <authorList>
            <person name="Horne S.M."/>
            <person name="Young K.D."/>
        </authorList>
    </citation>
    <scope>NUCLEOTIDE SEQUENCE [GENOMIC DNA]</scope>
    <source>
        <strain>K12 / CS109</strain>
    </source>
</reference>
<reference key="4">
    <citation type="journal article" date="1997" name="Science">
        <title>The complete genome sequence of Escherichia coli K-12.</title>
        <authorList>
            <person name="Blattner F.R."/>
            <person name="Plunkett G. III"/>
            <person name="Bloch C.A."/>
            <person name="Perna N.T."/>
            <person name="Burland V."/>
            <person name="Riley M."/>
            <person name="Collado-Vides J."/>
            <person name="Glasner J.D."/>
            <person name="Rode C.K."/>
            <person name="Mayhew G.F."/>
            <person name="Gregor J."/>
            <person name="Davis N.W."/>
            <person name="Kirkpatrick H.A."/>
            <person name="Goeden M.A."/>
            <person name="Rose D.J."/>
            <person name="Mau B."/>
            <person name="Shao Y."/>
        </authorList>
    </citation>
    <scope>NUCLEOTIDE SEQUENCE [LARGE SCALE GENOMIC DNA]</scope>
    <source>
        <strain>K12 / MG1655 / ATCC 47076</strain>
    </source>
</reference>
<reference key="5">
    <citation type="journal article" date="2006" name="Mol. Syst. Biol.">
        <title>Highly accurate genome sequences of Escherichia coli K-12 strains MG1655 and W3110.</title>
        <authorList>
            <person name="Hayashi K."/>
            <person name="Morooka N."/>
            <person name="Yamamoto Y."/>
            <person name="Fujita K."/>
            <person name="Isono K."/>
            <person name="Choi S."/>
            <person name="Ohtsubo E."/>
            <person name="Baba T."/>
            <person name="Wanner B.L."/>
            <person name="Mori H."/>
            <person name="Horiuchi T."/>
        </authorList>
    </citation>
    <scope>NUCLEOTIDE SEQUENCE [LARGE SCALE GENOMIC DNA]</scope>
    <source>
        <strain>K12 / W3110 / ATCC 27325 / DSM 5911</strain>
    </source>
</reference>
<reference key="6">
    <citation type="journal article" date="1997" name="J. Biol. Chem.">
        <title>The Escherichia coli SlyD is a metal ion-regulated peptidyl-prolyl cis/trans-isomerase.</title>
        <authorList>
            <person name="Hottenrott S."/>
            <person name="Schumann T."/>
            <person name="Plueckthun A."/>
            <person name="Fischer G."/>
            <person name="Rahfeld J.-U."/>
        </authorList>
    </citation>
    <scope>PROTEIN SEQUENCE OF 1-10</scope>
    <scope>ACTIVITY REGULATION</scope>
    <scope>CHARACTERIZATION</scope>
    <source>
        <strain>BL21</strain>
    </source>
</reference>
<reference key="7">
    <citation type="journal article" date="2002" name="Mol. Microbiol.">
        <title>The Escherichia coli FKBP-type PPIase SlyD is required for the stabilization of the E lysis protein of bacteriophage phi X174.</title>
        <authorList>
            <person name="Bernhardt T.G."/>
            <person name="Roof W.D."/>
            <person name="Young R."/>
        </authorList>
    </citation>
    <scope>FUNCTION IN LYSIS OF PHIX174 INFECTED CELLS</scope>
</reference>
<reference key="8">
    <citation type="journal article" date="2005" name="J. Biol. Chem.">
        <title>A role for SlyD in the Escherichia coli hydrogenase biosynthetic pathway.</title>
        <authorList>
            <person name="Zhang J.W."/>
            <person name="Butland G."/>
            <person name="Greenblatt J.F."/>
            <person name="Emili A."/>
            <person name="Zamble D.B."/>
        </authorList>
    </citation>
    <scope>FUNCTION IN HYDROGENASE METALLOCENTER ASSEMBLY</scope>
    <scope>INTERACTION WITH HYPB</scope>
    <source>
        <strain>K12 / W3110 / ATCC 27325 / DSM 5911</strain>
    </source>
</reference>
<reference key="9">
    <citation type="journal article" date="2006" name="Biochemistry">
        <title>SlyD proteins from different species exhibit high prolyl isomerase and chaperone activities.</title>
        <authorList>
            <person name="Scholz C."/>
            <person name="Eckert B."/>
            <person name="Hagn F."/>
            <person name="Schaarschmidt P."/>
            <person name="Balbach J."/>
            <person name="Schmid F.X."/>
        </authorList>
    </citation>
    <scope>FUNCTION AS A CHAPERONE AND A PPIASE</scope>
    <scope>CATALYTIC ACTIVITY</scope>
    <scope>ACTIVITY REGULATION</scope>
    <scope>DOMAIN</scope>
</reference>
<reference key="10">
    <citation type="journal article" date="2007" name="J. Bacteriol.">
        <title>The peptidyl-prolyl isomerase activity of SlyD is not required for maturation of Escherichia coli hydrogenase.</title>
        <authorList>
            <person name="Zhang J.W."/>
            <person name="Leach M.R."/>
            <person name="Zamble D.B."/>
        </authorList>
    </citation>
    <scope>FUNCTION IN HYDROGENASE METALLOCENTER ASSEMBLY</scope>
    <scope>DOMAIN</scope>
    <scope>MUTAGENESIS OF ILE-42 AND PHE-132</scope>
</reference>
<reference key="11">
    <citation type="journal article" date="2007" name="J. Biol. Chem.">
        <title>DnaK plays a pivotal role in Tat targeting of CueO and functions beside SlyD as a general Tat signal binding chaperone.</title>
        <authorList>
            <person name="Graubner W."/>
            <person name="Schierhorn A."/>
            <person name="Bruser T."/>
        </authorList>
    </citation>
    <scope>FUNCTION</scope>
    <scope>INTERACTION WITH TAT SIGNAL SEQUENCES</scope>
    <source>
        <strain>K12 / MC4100 / JA176</strain>
    </source>
</reference>
<reference key="12">
    <citation type="journal article" date="2009" name="J. Am. Chem. Soc.">
        <title>The Ni(II)-binding properties of the metallochaperone SlyD.</title>
        <authorList>
            <person name="Kaluarachchi H."/>
            <person name="Sutherland D.E."/>
            <person name="Young A."/>
            <person name="Pickering I.J."/>
            <person name="Stillman M.J."/>
            <person name="Zamble D.B."/>
        </authorList>
    </citation>
    <scope>SUBUNIT</scope>
    <scope>NICKEL-BINDING</scope>
    <scope>DOMAIN</scope>
    <scope>MUTAGENESIS OF 167-CYS-CYS-168 AND 184-CYS-CYS-185</scope>
</reference>
<reference key="13">
    <citation type="journal article" date="2009" name="FEBS J.">
        <title>The interaction of the Escherichia coli protein SlyD with nickel ions illuminates the mechanism of regulation of its peptidyl-prolyl isomerase activity.</title>
        <authorList>
            <person name="Martino L."/>
            <person name="He Y."/>
            <person name="Hands-Taylor K.L."/>
            <person name="Valentine E.R."/>
            <person name="Kelly G."/>
            <person name="Giancola C."/>
            <person name="Conte M.R."/>
        </authorList>
    </citation>
    <scope>STRUCTURE BY NMR</scope>
    <scope>NICKEL-BINDING</scope>
    <scope>DOMAIN</scope>
</reference>
<reference key="14">
    <citation type="journal article" date="2012" name="PLoS Biol.">
        <title>Two programmed cell death systems in Escherichia coli: an apoptotic-like death is inhibited by the mazEF-mediated death pathway.</title>
        <authorList>
            <person name="Erental A."/>
            <person name="Sharon I."/>
            <person name="Engelberg-Kulka H."/>
        </authorList>
    </citation>
    <scope>DISRUPTION PHENOTYPE</scope>
    <source>
        <strain>K12 / MC4100 / ATCC 35695 / DSM 6574</strain>
    </source>
</reference>
<reference key="15">
    <citation type="journal article" date="2009" name="J. Mol. Biol.">
        <title>NMR solution structure of SlyD from Escherichia coli: spatial separation of prolyl isomerase and chaperone function.</title>
        <authorList>
            <person name="Weininger U."/>
            <person name="Haupt C."/>
            <person name="Schweimer K."/>
            <person name="Graubner W."/>
            <person name="Kovermann M."/>
            <person name="Bruser T."/>
            <person name="Scholz C."/>
            <person name="Schaarschmidt P."/>
            <person name="Zoldak G."/>
            <person name="Schmid F.X."/>
            <person name="Balbach J."/>
        </authorList>
    </citation>
    <scope>STRUCTURE BY NMR OF 1-165</scope>
    <scope>FUNCTION AS A CHAPERONE</scope>
    <scope>DOMAIN</scope>
    <scope>BINDING TO UNFOLDED PROTEINS</scope>
</reference>
<reference evidence="12 13" key="16">
    <citation type="journal article" date="2023" name="Science">
        <title>The mechanism of the phage-encoded protein antibiotic from PhiX174.</title>
        <authorList>
            <person name="Orta A.K."/>
            <person name="Riera N."/>
            <person name="Li Y.E."/>
            <person name="Tanaka S."/>
            <person name="Yun H.G."/>
            <person name="Klaic L."/>
            <person name="Clemons W.M. Jr."/>
        </authorList>
    </citation>
    <scope>STRUCTURE BY ELECTRON MICROSCOPY (3.40 ANGSTROMS) OF 1-154</scope>
    <scope>IDENTIFICATION IN THE YES COMPLEX (MICROBIAL INFECTION)</scope>
    <scope>INTERACTION WITH ENTEROBACTERIA PHAGE PHIX174 LYSIS PROTEIN E (MICROBIAL INFECTION)</scope>
</reference>
<gene>
    <name type="primary">slyD</name>
    <name type="ordered locus">b3349</name>
    <name type="ordered locus">JW3311</name>
</gene>
<dbReference type="EC" id="5.2.1.8"/>
<dbReference type="EMBL" id="Z21496">
    <property type="protein sequence ID" value="CAA79705.1"/>
    <property type="molecule type" value="Genomic_DNA"/>
</dbReference>
<dbReference type="EMBL" id="L13261">
    <property type="protein sequence ID" value="AAA18574.1"/>
    <property type="molecule type" value="Unassigned_DNA"/>
</dbReference>
<dbReference type="EMBL" id="L28082">
    <property type="protein sequence ID" value="AAC41458.1"/>
    <property type="molecule type" value="Genomic_DNA"/>
</dbReference>
<dbReference type="EMBL" id="U18997">
    <property type="protein sequence ID" value="AAA58146.1"/>
    <property type="molecule type" value="Genomic_DNA"/>
</dbReference>
<dbReference type="EMBL" id="U00096">
    <property type="protein sequence ID" value="AAC76374.1"/>
    <property type="molecule type" value="Genomic_DNA"/>
</dbReference>
<dbReference type="EMBL" id="AP009048">
    <property type="protein sequence ID" value="BAE77942.1"/>
    <property type="molecule type" value="Genomic_DNA"/>
</dbReference>
<dbReference type="PIR" id="A49987">
    <property type="entry name" value="A49987"/>
</dbReference>
<dbReference type="RefSeq" id="NP_417808.1">
    <property type="nucleotide sequence ID" value="NC_000913.3"/>
</dbReference>
<dbReference type="RefSeq" id="WP_000861334.1">
    <property type="nucleotide sequence ID" value="NZ_STEB01000004.1"/>
</dbReference>
<dbReference type="PDB" id="2K8I">
    <property type="method" value="NMR"/>
    <property type="chains" value="A=1-165"/>
</dbReference>
<dbReference type="PDB" id="2KFW">
    <property type="method" value="NMR"/>
    <property type="chains" value="A=1-196"/>
</dbReference>
<dbReference type="PDB" id="5I7P">
    <property type="method" value="X-ray"/>
    <property type="resolution" value="2.00 A"/>
    <property type="chains" value="A=70-129"/>
</dbReference>
<dbReference type="PDB" id="8G01">
    <property type="method" value="EM"/>
    <property type="resolution" value="3.40 A"/>
    <property type="chains" value="C/D=1-154"/>
</dbReference>
<dbReference type="PDB" id="8G02">
    <property type="method" value="EM"/>
    <property type="resolution" value="3.50 A"/>
    <property type="chains" value="F/H=1-154"/>
</dbReference>
<dbReference type="PDBsum" id="2K8I"/>
<dbReference type="PDBsum" id="2KFW"/>
<dbReference type="PDBsum" id="5I7P"/>
<dbReference type="PDBsum" id="8G01"/>
<dbReference type="PDBsum" id="8G02"/>
<dbReference type="BMRB" id="P0A9K9"/>
<dbReference type="EMDB" id="EMD-29641"/>
<dbReference type="SMR" id="P0A9K9"/>
<dbReference type="BioGRID" id="4260682">
    <property type="interactions" value="149"/>
</dbReference>
<dbReference type="DIP" id="DIP-31853N"/>
<dbReference type="FunCoup" id="P0A9K9">
    <property type="interactions" value="719"/>
</dbReference>
<dbReference type="IntAct" id="P0A9K9">
    <property type="interactions" value="124"/>
</dbReference>
<dbReference type="MINT" id="P0A9K9"/>
<dbReference type="STRING" id="511145.b3349"/>
<dbReference type="jPOST" id="P0A9K9"/>
<dbReference type="PaxDb" id="511145-b3349"/>
<dbReference type="EnsemblBacteria" id="AAC76374">
    <property type="protein sequence ID" value="AAC76374"/>
    <property type="gene ID" value="b3349"/>
</dbReference>
<dbReference type="GeneID" id="93778649"/>
<dbReference type="GeneID" id="947859"/>
<dbReference type="KEGG" id="ecj:JW3311"/>
<dbReference type="KEGG" id="eco:b3349"/>
<dbReference type="KEGG" id="ecoc:C3026_18185"/>
<dbReference type="PATRIC" id="fig|511145.12.peg.3442"/>
<dbReference type="EchoBASE" id="EB1614"/>
<dbReference type="eggNOG" id="COG1047">
    <property type="taxonomic scope" value="Bacteria"/>
</dbReference>
<dbReference type="HOGENOM" id="CLU_098197_1_0_6"/>
<dbReference type="InParanoid" id="P0A9K9"/>
<dbReference type="OMA" id="HSHEGGC"/>
<dbReference type="OrthoDB" id="9808891at2"/>
<dbReference type="PhylomeDB" id="P0A9K9"/>
<dbReference type="BioCyc" id="EcoCyc:EG11663-MONOMER"/>
<dbReference type="BioCyc" id="MetaCyc:EG11663-MONOMER"/>
<dbReference type="EvolutionaryTrace" id="P0A9K9"/>
<dbReference type="PRO" id="PR:P0A9K9"/>
<dbReference type="Proteomes" id="UP000000625">
    <property type="component" value="Chromosome"/>
</dbReference>
<dbReference type="GO" id="GO:0005829">
    <property type="term" value="C:cytosol"/>
    <property type="evidence" value="ECO:0000314"/>
    <property type="project" value="EcoCyc"/>
</dbReference>
<dbReference type="GO" id="GO:0050897">
    <property type="term" value="F:cobalt ion binding"/>
    <property type="evidence" value="ECO:0000314"/>
    <property type="project" value="EcoCyc"/>
</dbReference>
<dbReference type="GO" id="GO:0005507">
    <property type="term" value="F:copper ion binding"/>
    <property type="evidence" value="ECO:0000314"/>
    <property type="project" value="EcoCyc"/>
</dbReference>
<dbReference type="GO" id="GO:0016151">
    <property type="term" value="F:nickel cation binding"/>
    <property type="evidence" value="ECO:0000314"/>
    <property type="project" value="EcoCyc"/>
</dbReference>
<dbReference type="GO" id="GO:0003755">
    <property type="term" value="F:peptidyl-prolyl cis-trans isomerase activity"/>
    <property type="evidence" value="ECO:0000314"/>
    <property type="project" value="EcoCyc"/>
</dbReference>
<dbReference type="GO" id="GO:0051082">
    <property type="term" value="F:unfolded protein binding"/>
    <property type="evidence" value="ECO:0000314"/>
    <property type="project" value="EcoCyc"/>
</dbReference>
<dbReference type="GO" id="GO:0008270">
    <property type="term" value="F:zinc ion binding"/>
    <property type="evidence" value="ECO:0000314"/>
    <property type="project" value="EcoCyc"/>
</dbReference>
<dbReference type="GO" id="GO:0051604">
    <property type="term" value="P:protein maturation"/>
    <property type="evidence" value="ECO:0000315"/>
    <property type="project" value="EcoCyc"/>
</dbReference>
<dbReference type="GO" id="GO:0042026">
    <property type="term" value="P:protein refolding"/>
    <property type="evidence" value="ECO:0000314"/>
    <property type="project" value="EcoCyc"/>
</dbReference>
<dbReference type="GO" id="GO:0050821">
    <property type="term" value="P:protein stabilization"/>
    <property type="evidence" value="ECO:0000315"/>
    <property type="project" value="EcoliWiki"/>
</dbReference>
<dbReference type="GO" id="GO:0009408">
    <property type="term" value="P:response to heat"/>
    <property type="evidence" value="ECO:0000270"/>
    <property type="project" value="EcoliWiki"/>
</dbReference>
<dbReference type="DisProt" id="DP00766"/>
<dbReference type="FunFam" id="2.40.10.330:FF:000001">
    <property type="entry name" value="Peptidyl-prolyl cis-trans isomerase"/>
    <property type="match status" value="1"/>
</dbReference>
<dbReference type="Gene3D" id="2.40.10.330">
    <property type="match status" value="1"/>
</dbReference>
<dbReference type="Gene3D" id="3.10.50.40">
    <property type="match status" value="1"/>
</dbReference>
<dbReference type="InterPro" id="IPR046357">
    <property type="entry name" value="PPIase_dom_sf"/>
</dbReference>
<dbReference type="InterPro" id="IPR001179">
    <property type="entry name" value="PPIase_FKBP_dom"/>
</dbReference>
<dbReference type="InterPro" id="IPR048261">
    <property type="entry name" value="SlpA/SlyD-like_ins_sf"/>
</dbReference>
<dbReference type="NCBIfam" id="NF008008">
    <property type="entry name" value="PRK10737.1"/>
    <property type="match status" value="1"/>
</dbReference>
<dbReference type="PANTHER" id="PTHR47861">
    <property type="entry name" value="FKBP-TYPE PEPTIDYL-PROLYL CIS-TRANS ISOMERASE SLYD"/>
    <property type="match status" value="1"/>
</dbReference>
<dbReference type="PANTHER" id="PTHR47861:SF3">
    <property type="entry name" value="FKBP-TYPE PEPTIDYL-PROLYL CIS-TRANS ISOMERASE SLYD"/>
    <property type="match status" value="1"/>
</dbReference>
<dbReference type="Pfam" id="PF00254">
    <property type="entry name" value="FKBP_C"/>
    <property type="match status" value="1"/>
</dbReference>
<dbReference type="SUPFAM" id="SSF54534">
    <property type="entry name" value="FKBP-like"/>
    <property type="match status" value="1"/>
</dbReference>
<dbReference type="PROSITE" id="PS50059">
    <property type="entry name" value="FKBP_PPIASE"/>
    <property type="match status" value="1"/>
</dbReference>
<evidence type="ECO:0000255" key="1"/>
<evidence type="ECO:0000255" key="2">
    <source>
        <dbReference type="PROSITE-ProRule" id="PRU00277"/>
    </source>
</evidence>
<evidence type="ECO:0000269" key="3">
    <source>
    </source>
</evidence>
<evidence type="ECO:0000269" key="4">
    <source>
    </source>
</evidence>
<evidence type="ECO:0000269" key="5">
    <source>
    </source>
</evidence>
<evidence type="ECO:0000269" key="6">
    <source>
    </source>
</evidence>
<evidence type="ECO:0000269" key="7">
    <source>
    </source>
</evidence>
<evidence type="ECO:0000269" key="8">
    <source>
    </source>
</evidence>
<evidence type="ECO:0000269" key="9">
    <source>
    </source>
</evidence>
<evidence type="ECO:0000269" key="10">
    <source>
    </source>
</evidence>
<evidence type="ECO:0000305" key="11"/>
<evidence type="ECO:0007744" key="12">
    <source>
        <dbReference type="PDB" id="8G01"/>
    </source>
</evidence>
<evidence type="ECO:0007744" key="13">
    <source>
        <dbReference type="PDB" id="8G02"/>
    </source>
</evidence>
<evidence type="ECO:0007829" key="14">
    <source>
        <dbReference type="PDB" id="2K8I"/>
    </source>
</evidence>
<evidence type="ECO:0007829" key="15">
    <source>
        <dbReference type="PDB" id="2KFW"/>
    </source>
</evidence>
<evidence type="ECO:0007829" key="16">
    <source>
        <dbReference type="PDB" id="5I7P"/>
    </source>
</evidence>
<evidence type="ECO:0007829" key="17">
    <source>
        <dbReference type="PDB" id="8G01"/>
    </source>
</evidence>
<accession>P0A9K9</accession>
<accession>P30856</accession>
<accession>Q2M714</accession>
<proteinExistence type="evidence at protein level"/>
<sequence length="196" mass="20853">MKVAKDLVVSLAYQVRTEDGVLVDESPVSAPLDYLHGHGSLISGLETALEGHEVGDKFDVAVGANDAYGQYDENLVQRVPKDVFMGVDELQVGMRFLAETDQGPVPVEITAVEDDHVVVDGNHMLAGQNLKFNVEVVAIREATEEELAHGHVHGAHDHHHDHDHDGCCGGHGHDHGHEHGGEGCCGGKGNGGCGCH</sequence>
<keyword id="KW-0002">3D-structure</keyword>
<keyword id="KW-0143">Chaperone</keyword>
<keyword id="KW-0170">Cobalt</keyword>
<keyword id="KW-0186">Copper</keyword>
<keyword id="KW-0963">Cytoplasm</keyword>
<keyword id="KW-0903">Direct protein sequencing</keyword>
<keyword id="KW-0413">Isomerase</keyword>
<keyword id="KW-0479">Metal-binding</keyword>
<keyword id="KW-0533">Nickel</keyword>
<keyword id="KW-1185">Reference proteome</keyword>
<keyword id="KW-0697">Rotamase</keyword>
<keyword id="KW-0862">Zinc</keyword>
<feature type="chain" id="PRO_0000075355" description="FKBP-type peptidyl-prolyl cis-trans isomerase SlyD">
    <location>
        <begin position="1"/>
        <end position="196"/>
    </location>
</feature>
<feature type="domain" description="PPIase FKBP-type" evidence="2">
    <location>
        <begin position="1"/>
        <end position="95"/>
    </location>
</feature>
<feature type="region of interest" description="PPIase first part">
    <location>
        <begin position="1"/>
        <end position="69"/>
    </location>
</feature>
<feature type="region of interest" description="IF-chaperone">
    <location>
        <begin position="76"/>
        <end position="120"/>
    </location>
</feature>
<feature type="region of interest" description="PPIase second part">
    <location>
        <begin position="129"/>
        <end position="151"/>
    </location>
</feature>
<feature type="binding site" evidence="1">
    <location>
        <position position="167"/>
    </location>
    <ligand>
        <name>Ni(2+)</name>
        <dbReference type="ChEBI" id="CHEBI:49786"/>
    </ligand>
</feature>
<feature type="binding site" evidence="1">
    <location>
        <position position="168"/>
    </location>
    <ligand>
        <name>Ni(2+)</name>
        <dbReference type="ChEBI" id="CHEBI:49786"/>
    </ligand>
</feature>
<feature type="binding site" evidence="1">
    <location>
        <position position="184"/>
    </location>
    <ligand>
        <name>Ni(2+)</name>
        <dbReference type="ChEBI" id="CHEBI:49786"/>
    </ligand>
</feature>
<feature type="binding site" evidence="1">
    <location>
        <position position="185"/>
    </location>
    <ligand>
        <name>Ni(2+)</name>
        <dbReference type="ChEBI" id="CHEBI:49786"/>
    </ligand>
</feature>
<feature type="binding site" evidence="1">
    <location>
        <position position="193"/>
    </location>
    <ligand>
        <name>Ni(2+)</name>
        <dbReference type="ChEBI" id="CHEBI:49786"/>
    </ligand>
</feature>
<feature type="binding site" evidence="1">
    <location>
        <position position="195"/>
    </location>
    <ligand>
        <name>Ni(2+)</name>
        <dbReference type="ChEBI" id="CHEBI:49786"/>
    </ligand>
</feature>
<feature type="mutagenesis site" description="Decrease in PPIase activity, but has little impact on chaperone activity and interaction with HypB. Almost complete loss of PPIase activity; when associated with Y-132." evidence="6">
    <original>I</original>
    <variation>S</variation>
    <location>
        <position position="42"/>
    </location>
</feature>
<feature type="mutagenesis site" description="Almost complete loss of PPIase activity, but has little impact on chaperone activity and interaction with HypB; when associated with S-42." evidence="6">
    <original>F</original>
    <variation>Y</variation>
    <location>
        <position position="132"/>
    </location>
</feature>
<feature type="mutagenesis site" description="Reduces nickel-binding capacity." evidence="7">
    <original>CC</original>
    <variation>AA</variation>
    <location>
        <begin position="167"/>
        <end position="168"/>
    </location>
</feature>
<feature type="mutagenesis site" description="Reduces nickel-binding capacity." evidence="7">
    <original>CC</original>
    <variation>AA</variation>
    <location>
        <begin position="184"/>
        <end position="185"/>
    </location>
</feature>
<feature type="strand" evidence="17">
    <location>
        <begin position="7"/>
        <end position="17"/>
    </location>
</feature>
<feature type="turn" evidence="15">
    <location>
        <begin position="18"/>
        <end position="20"/>
    </location>
</feature>
<feature type="strand" evidence="17">
    <location>
        <begin position="22"/>
        <end position="25"/>
    </location>
</feature>
<feature type="strand" evidence="14">
    <location>
        <begin position="28"/>
        <end position="30"/>
    </location>
</feature>
<feature type="strand" evidence="17">
    <location>
        <begin position="32"/>
        <end position="39"/>
    </location>
</feature>
<feature type="helix" evidence="17">
    <location>
        <begin position="43"/>
        <end position="49"/>
    </location>
</feature>
<feature type="strand" evidence="15">
    <location>
        <begin position="50"/>
        <end position="52"/>
    </location>
</feature>
<feature type="strand" evidence="17">
    <location>
        <begin position="57"/>
        <end position="62"/>
    </location>
</feature>
<feature type="helix" evidence="17">
    <location>
        <begin position="64"/>
        <end position="66"/>
    </location>
</feature>
<feature type="strand" evidence="15">
    <location>
        <begin position="67"/>
        <end position="69"/>
    </location>
</feature>
<feature type="helix" evidence="16">
    <location>
        <begin position="73"/>
        <end position="75"/>
    </location>
</feature>
<feature type="strand" evidence="16">
    <location>
        <begin position="76"/>
        <end position="79"/>
    </location>
</feature>
<feature type="strand" evidence="16">
    <location>
        <begin position="81"/>
        <end position="83"/>
    </location>
</feature>
<feature type="strand" evidence="16">
    <location>
        <begin position="95"/>
        <end position="100"/>
    </location>
</feature>
<feature type="strand" evidence="16">
    <location>
        <begin position="103"/>
        <end position="112"/>
    </location>
</feature>
<feature type="strand" evidence="16">
    <location>
        <begin position="117"/>
        <end position="120"/>
    </location>
</feature>
<feature type="turn" evidence="16">
    <location>
        <begin position="124"/>
        <end position="127"/>
    </location>
</feature>
<feature type="strand" evidence="16">
    <location>
        <begin position="130"/>
        <end position="139"/>
    </location>
</feature>
<feature type="helix" evidence="17">
    <location>
        <begin position="144"/>
        <end position="148"/>
    </location>
</feature>
<feature type="strand" evidence="15">
    <location>
        <begin position="177"/>
        <end position="182"/>
    </location>
</feature>
<protein>
    <recommendedName>
        <fullName>FKBP-type peptidyl-prolyl cis-trans isomerase SlyD</fullName>
        <shortName>PPIase</shortName>
        <ecNumber>5.2.1.8</ecNumber>
    </recommendedName>
    <alternativeName>
        <fullName>Histidine-rich protein</fullName>
    </alternativeName>
    <alternativeName>
        <fullName>Metallochaperone SlyD</fullName>
    </alternativeName>
    <alternativeName>
        <fullName>Rotamase</fullName>
    </alternativeName>
    <alternativeName>
        <fullName>Sensitivity to lysis protein D</fullName>
    </alternativeName>
    <alternativeName>
        <fullName>WHP</fullName>
    </alternativeName>
</protein>
<comment type="function">
    <text>Folding helper with both chaperone and peptidyl-prolyl cis-trans isomerase (PPIase) activities. Chaperone activity prevents aggregation of unfolded or partially folded proteins and promotes their correct folding. PPIases catalyze the cis-trans isomerization of Xaa-Pro bonds of peptides, which accelerates slow steps of protein folding and thus shortens the lifetime of intermediates. Both strategies lower the concentration of intermediates and increase the productivity and yield of the folding reaction. SlyD could be involved in Tat-dependent translocation, by binding to the Tat-type signal of folded proteins. The PPIase substrate specificity, carried out with synthetic peptides of the 'suc-Ala-Xaa-Pro-Phe-4NA' type (where Xaa is the AA tested), was found to be Phe &gt; Ala &gt; Leu.</text>
</comment>
<comment type="function">
    <text>Required for lysis of phiX174 infected cells by stabilizing the hydrophobic viral lysis protein E and allowing it to accumulate to the levels required to exert its lytic effect. May act by a chaperone-like mechanism.</text>
</comment>
<comment type="function">
    <text>Also involved in hydrogenase metallocenter assembly, probably by participating in the nickel insertion step. This function in hydrogenase biosynthesis requires chaperone activity and the presence of the metal-binding domain, but not PPIase activity.</text>
</comment>
<comment type="catalytic activity">
    <reaction evidence="4">
        <text>[protein]-peptidylproline (omega=180) = [protein]-peptidylproline (omega=0)</text>
        <dbReference type="Rhea" id="RHEA:16237"/>
        <dbReference type="Rhea" id="RHEA-COMP:10747"/>
        <dbReference type="Rhea" id="RHEA-COMP:10748"/>
        <dbReference type="ChEBI" id="CHEBI:83833"/>
        <dbReference type="ChEBI" id="CHEBI:83834"/>
        <dbReference type="EC" id="5.2.1.8"/>
    </reaction>
</comment>
<comment type="activity regulation">
    <text evidence="4 10">PPIase activity is inhibited by binding of nickel ions to the C-terminal metal-binding region and/or the C-terminal part of the PPIase domain. Folding activity is inhibited by FK506 and by permanently unfolded proteins, irrespective of their proline content.</text>
</comment>
<comment type="subunit">
    <text evidence="3 5 7">Monomer. Binds to a broad range of unrelated Tat signal sequences. Interacts with the hydrogenase nickel incorporation protein HypB.</text>
</comment>
<comment type="subunit">
    <text evidence="9">(Microbial infection) Interacts with Enterobacteria phage phiX174 lysis protein E; this interaction protects E from proteolysis and stabilizes the YES complex (PubMed:37440661). Part of the YES complex composed of 2 host Mray molecules, 2 viral lysis protein E molecules and 2 host SlyD molecules (PubMed:37440661).</text>
</comment>
<comment type="interaction">
    <interactant intactId="EBI-369251">
        <id>P0A9K9</id>
    </interactant>
    <interactant intactId="EBI-561424">
        <id>P68066</id>
        <label>grcA</label>
    </interactant>
    <organismsDiffer>false</organismsDiffer>
    <experiments>3</experiments>
</comment>
<comment type="interaction">
    <interactant intactId="EBI-369251">
        <id>P0A9K9</id>
    </interactant>
    <interactant intactId="EBI-552702">
        <id>P16431</id>
        <label>hycE</label>
    </interactant>
    <organismsDiffer>false</organismsDiffer>
    <experiments>7</experiments>
</comment>
<comment type="interaction">
    <interactant intactId="EBI-369251">
        <id>P0A9K9</id>
    </interactant>
    <interactant intactId="EBI-558261">
        <id>P0AAN3</id>
        <label>hypB</label>
    </interactant>
    <organismsDiffer>false</organismsDiffer>
    <experiments>6</experiments>
</comment>
<comment type="subcellular location">
    <subcellularLocation>
        <location>Cytoplasm</location>
    </subcellularLocation>
</comment>
<comment type="domain">
    <text>The N-terminal region consists of two globular folded domains that contain prolyl isomerase and chaperone activities.</text>
</comment>
<comment type="domain">
    <text>The C-terminal region binds up to 7 nickel ions in a non-cooperative manner. Can also bind zinc with high affinity, and copper or cobalt with lower affinity. No binding detectable for ferrous, ferric, magnesium and calcium ions. Binding of nickel causes conformational rearrangements in the PPIase domain, modulating its isomerase activity. This region is also important for hydrogenase biosynthesis.</text>
</comment>
<comment type="disruption phenotype">
    <text evidence="8">Cells undergo an apoptotic-like death upon DNA damage characterized by membrane depolarization.</text>
</comment>
<comment type="miscellaneous">
    <text>The activity of SlyD is considerably smaller than the one found in other PPIases with the same substrate.</text>
</comment>
<comment type="similarity">
    <text evidence="11">Belongs to the FKBP-type PPIase family.</text>
</comment>
<organism>
    <name type="scientific">Escherichia coli (strain K12)</name>
    <dbReference type="NCBI Taxonomy" id="83333"/>
    <lineage>
        <taxon>Bacteria</taxon>
        <taxon>Pseudomonadati</taxon>
        <taxon>Pseudomonadota</taxon>
        <taxon>Gammaproteobacteria</taxon>
        <taxon>Enterobacterales</taxon>
        <taxon>Enterobacteriaceae</taxon>
        <taxon>Escherichia</taxon>
    </lineage>
</organism>
<name>SLYD_ECOLI</name>